<name>PFD3_CAEEL</name>
<dbReference type="EMBL" id="Z81587">
    <property type="protein sequence ID" value="CAB04707.1"/>
    <property type="molecule type" value="Genomic_DNA"/>
</dbReference>
<dbReference type="PIR" id="T24621">
    <property type="entry name" value="T24621"/>
</dbReference>
<dbReference type="RefSeq" id="NP_493228.1">
    <property type="nucleotide sequence ID" value="NM_060827.7"/>
</dbReference>
<dbReference type="SMR" id="O18054"/>
<dbReference type="BioGRID" id="38538">
    <property type="interactions" value="12"/>
</dbReference>
<dbReference type="DIP" id="DIP-24979N"/>
<dbReference type="FunCoup" id="O18054">
    <property type="interactions" value="2714"/>
</dbReference>
<dbReference type="STRING" id="6239.T06G6.9.1"/>
<dbReference type="iPTMnet" id="O18054"/>
<dbReference type="PaxDb" id="6239-T06G6.9"/>
<dbReference type="PeptideAtlas" id="O18054"/>
<dbReference type="EnsemblMetazoa" id="T06G6.9.1">
    <property type="protein sequence ID" value="T06G6.9.1"/>
    <property type="gene ID" value="WBGene00006889"/>
</dbReference>
<dbReference type="GeneID" id="173141"/>
<dbReference type="KEGG" id="cel:CELE_T06G6.9"/>
<dbReference type="AGR" id="WB:WBGene00006889"/>
<dbReference type="CTD" id="173141"/>
<dbReference type="WormBase" id="T06G6.9">
    <property type="protein sequence ID" value="CE13349"/>
    <property type="gene ID" value="WBGene00006889"/>
    <property type="gene designation" value="pfd-3"/>
</dbReference>
<dbReference type="eggNOG" id="KOG3313">
    <property type="taxonomic scope" value="Eukaryota"/>
</dbReference>
<dbReference type="GeneTree" id="ENSGT00390000018904"/>
<dbReference type="HOGENOM" id="CLU_083737_1_0_1"/>
<dbReference type="InParanoid" id="O18054"/>
<dbReference type="OMA" id="YNWDVAQ"/>
<dbReference type="OrthoDB" id="6375174at2759"/>
<dbReference type="PhylomeDB" id="O18054"/>
<dbReference type="PRO" id="PR:O18054"/>
<dbReference type="Proteomes" id="UP000001940">
    <property type="component" value="Chromosome I"/>
</dbReference>
<dbReference type="Bgee" id="WBGene00006889">
    <property type="expression patterns" value="Expressed in germ line (C elegans) and 5 other cell types or tissues"/>
</dbReference>
<dbReference type="GO" id="GO:0005737">
    <property type="term" value="C:cytoplasm"/>
    <property type="evidence" value="ECO:0000314"/>
    <property type="project" value="WormBase"/>
</dbReference>
<dbReference type="GO" id="GO:0016272">
    <property type="term" value="C:prefoldin complex"/>
    <property type="evidence" value="ECO:0000318"/>
    <property type="project" value="GO_Central"/>
</dbReference>
<dbReference type="GO" id="GO:0015631">
    <property type="term" value="F:tubulin binding"/>
    <property type="evidence" value="ECO:0000318"/>
    <property type="project" value="GO_Central"/>
</dbReference>
<dbReference type="GO" id="GO:0007017">
    <property type="term" value="P:microtubule-based process"/>
    <property type="evidence" value="ECO:0000318"/>
    <property type="project" value="GO_Central"/>
</dbReference>
<dbReference type="GO" id="GO:0006457">
    <property type="term" value="P:protein folding"/>
    <property type="evidence" value="ECO:0007669"/>
    <property type="project" value="InterPro"/>
</dbReference>
<dbReference type="GO" id="GO:0007021">
    <property type="term" value="P:tubulin complex assembly"/>
    <property type="evidence" value="ECO:0000318"/>
    <property type="project" value="GO_Central"/>
</dbReference>
<dbReference type="CDD" id="cd23156">
    <property type="entry name" value="Prefoldin_3"/>
    <property type="match status" value="1"/>
</dbReference>
<dbReference type="FunFam" id="1.10.287.370:FF:000001">
    <property type="entry name" value="Prefoldin subunit 3"/>
    <property type="match status" value="1"/>
</dbReference>
<dbReference type="Gene3D" id="1.10.287.370">
    <property type="match status" value="1"/>
</dbReference>
<dbReference type="InterPro" id="IPR016655">
    <property type="entry name" value="PFD3"/>
</dbReference>
<dbReference type="InterPro" id="IPR009053">
    <property type="entry name" value="Prefoldin"/>
</dbReference>
<dbReference type="InterPro" id="IPR004127">
    <property type="entry name" value="Prefoldin_subunit_alpha"/>
</dbReference>
<dbReference type="PANTHER" id="PTHR12409">
    <property type="entry name" value="PREFOLDIN SUBUNIT 3"/>
    <property type="match status" value="1"/>
</dbReference>
<dbReference type="PANTHER" id="PTHR12409:SF0">
    <property type="entry name" value="PREFOLDIN SUBUNIT 3"/>
    <property type="match status" value="1"/>
</dbReference>
<dbReference type="Pfam" id="PF02996">
    <property type="entry name" value="Prefoldin"/>
    <property type="match status" value="1"/>
</dbReference>
<dbReference type="PIRSF" id="PIRSF016396">
    <property type="entry name" value="Prefoldin_subunit_3"/>
    <property type="match status" value="1"/>
</dbReference>
<dbReference type="SUPFAM" id="SSF46579">
    <property type="entry name" value="Prefoldin"/>
    <property type="match status" value="1"/>
</dbReference>
<proteinExistence type="inferred from homology"/>
<comment type="function">
    <text evidence="1">Binds specifically to cytosolic chaperonin (c-CPN) and transfers target proteins to it. Binds to nascent polypeptide chain and promotes folding in an environment in which there are many competing pathways for nonnative proteins (By similarity).</text>
</comment>
<comment type="subunit">
    <text evidence="1">Heterohexamer of two PFD-alpha type and four PFD-beta type subunits.</text>
</comment>
<comment type="similarity">
    <text evidence="2">Belongs to the prefoldin subunit alpha family.</text>
</comment>
<sequence length="185" mass="20885">MSDTADSLSARGIPKSELIEDVESWLTKEKLSIEEAEVVLREKYGKYKYVESSMLAQKVRMSEKIPEFENSLSIIDTLIAKRAADESFETTFLLSDDVYTKATVQKPEKVSIWLGANVMVEYDLENARKLLDKNRGSVQKVVDELTNELSYIKDQITTTEVNMSHIVNFGVNKRRAALAVNNGAK</sequence>
<reference key="1">
    <citation type="journal article" date="1998" name="Science">
        <title>Genome sequence of the nematode C. elegans: a platform for investigating biology.</title>
        <authorList>
            <consortium name="The C. elegans sequencing consortium"/>
        </authorList>
    </citation>
    <scope>NUCLEOTIDE SEQUENCE [LARGE SCALE GENOMIC DNA]</scope>
    <source>
        <strain>Bristol N2</strain>
    </source>
</reference>
<gene>
    <name type="primary">pfd-3</name>
    <name type="synonym">vbp-1</name>
    <name type="ORF">T06G6.9</name>
</gene>
<organism>
    <name type="scientific">Caenorhabditis elegans</name>
    <dbReference type="NCBI Taxonomy" id="6239"/>
    <lineage>
        <taxon>Eukaryota</taxon>
        <taxon>Metazoa</taxon>
        <taxon>Ecdysozoa</taxon>
        <taxon>Nematoda</taxon>
        <taxon>Chromadorea</taxon>
        <taxon>Rhabditida</taxon>
        <taxon>Rhabditina</taxon>
        <taxon>Rhabditomorpha</taxon>
        <taxon>Rhabditoidea</taxon>
        <taxon>Rhabditidae</taxon>
        <taxon>Peloderinae</taxon>
        <taxon>Caenorhabditis</taxon>
    </lineage>
</organism>
<accession>O18054</accession>
<evidence type="ECO:0000250" key="1"/>
<evidence type="ECO:0000305" key="2"/>
<keyword id="KW-0143">Chaperone</keyword>
<keyword id="KW-1185">Reference proteome</keyword>
<protein>
    <recommendedName>
        <fullName>Probable prefoldin subunit 3</fullName>
    </recommendedName>
</protein>
<feature type="chain" id="PRO_0000153655" description="Probable prefoldin subunit 3">
    <location>
        <begin position="1"/>
        <end position="185"/>
    </location>
</feature>